<gene>
    <name type="ordered locus">trd_1288</name>
</gene>
<organism>
    <name type="scientific">Thermomicrobium roseum (strain ATCC 27502 / DSM 5159 / P-2)</name>
    <dbReference type="NCBI Taxonomy" id="309801"/>
    <lineage>
        <taxon>Bacteria</taxon>
        <taxon>Pseudomonadati</taxon>
        <taxon>Thermomicrobiota</taxon>
        <taxon>Thermomicrobia</taxon>
        <taxon>Thermomicrobiales</taxon>
        <taxon>Thermomicrobiaceae</taxon>
        <taxon>Thermomicrobium</taxon>
    </lineage>
</organism>
<comment type="similarity">
    <text evidence="1">Belongs to the CinA family.</text>
</comment>
<evidence type="ECO:0000255" key="1">
    <source>
        <dbReference type="HAMAP-Rule" id="MF_00226"/>
    </source>
</evidence>
<dbReference type="EMBL" id="CP001275">
    <property type="protein sequence ID" value="ACM06259.1"/>
    <property type="molecule type" value="Genomic_DNA"/>
</dbReference>
<dbReference type="RefSeq" id="WP_015922238.1">
    <property type="nucleotide sequence ID" value="NC_011959.1"/>
</dbReference>
<dbReference type="SMR" id="B9L1M7"/>
<dbReference type="STRING" id="309801.trd_1288"/>
<dbReference type="KEGG" id="tro:trd_1288"/>
<dbReference type="eggNOG" id="COG1058">
    <property type="taxonomic scope" value="Bacteria"/>
</dbReference>
<dbReference type="eggNOG" id="COG1546">
    <property type="taxonomic scope" value="Bacteria"/>
</dbReference>
<dbReference type="HOGENOM" id="CLU_030805_9_3_0"/>
<dbReference type="OrthoDB" id="9801454at2"/>
<dbReference type="Proteomes" id="UP000000447">
    <property type="component" value="Chromosome"/>
</dbReference>
<dbReference type="CDD" id="cd00885">
    <property type="entry name" value="cinA"/>
    <property type="match status" value="1"/>
</dbReference>
<dbReference type="Gene3D" id="3.30.70.2860">
    <property type="match status" value="1"/>
</dbReference>
<dbReference type="Gene3D" id="3.90.950.20">
    <property type="entry name" value="CinA-like"/>
    <property type="match status" value="1"/>
</dbReference>
<dbReference type="Gene3D" id="3.40.980.10">
    <property type="entry name" value="MoaB/Mog-like domain"/>
    <property type="match status" value="1"/>
</dbReference>
<dbReference type="HAMAP" id="MF_00226_B">
    <property type="entry name" value="CinA_B"/>
    <property type="match status" value="1"/>
</dbReference>
<dbReference type="InterPro" id="IPR050101">
    <property type="entry name" value="CinA"/>
</dbReference>
<dbReference type="InterPro" id="IPR036653">
    <property type="entry name" value="CinA-like_C"/>
</dbReference>
<dbReference type="InterPro" id="IPR008136">
    <property type="entry name" value="CinA_C"/>
</dbReference>
<dbReference type="InterPro" id="IPR041424">
    <property type="entry name" value="CinA_KH"/>
</dbReference>
<dbReference type="InterPro" id="IPR008135">
    <property type="entry name" value="Competence-induced_CinA"/>
</dbReference>
<dbReference type="InterPro" id="IPR036425">
    <property type="entry name" value="MoaB/Mog-like_dom_sf"/>
</dbReference>
<dbReference type="InterPro" id="IPR001453">
    <property type="entry name" value="MoaB/Mog_dom"/>
</dbReference>
<dbReference type="NCBIfam" id="TIGR00200">
    <property type="entry name" value="cinA_nterm"/>
    <property type="match status" value="1"/>
</dbReference>
<dbReference type="PANTHER" id="PTHR13939">
    <property type="entry name" value="NICOTINAMIDE-NUCLEOTIDE AMIDOHYDROLASE PNCC"/>
    <property type="match status" value="1"/>
</dbReference>
<dbReference type="PANTHER" id="PTHR13939:SF0">
    <property type="entry name" value="NMN AMIDOHYDROLASE-LIKE PROTEIN YFAY"/>
    <property type="match status" value="1"/>
</dbReference>
<dbReference type="Pfam" id="PF02464">
    <property type="entry name" value="CinA"/>
    <property type="match status" value="1"/>
</dbReference>
<dbReference type="Pfam" id="PF18146">
    <property type="entry name" value="CinA_KH"/>
    <property type="match status" value="1"/>
</dbReference>
<dbReference type="Pfam" id="PF00994">
    <property type="entry name" value="MoCF_biosynth"/>
    <property type="match status" value="1"/>
</dbReference>
<dbReference type="PIRSF" id="PIRSF006728">
    <property type="entry name" value="CinA"/>
    <property type="match status" value="1"/>
</dbReference>
<dbReference type="SMART" id="SM00852">
    <property type="entry name" value="MoCF_biosynth"/>
    <property type="match status" value="1"/>
</dbReference>
<dbReference type="SUPFAM" id="SSF142433">
    <property type="entry name" value="CinA-like"/>
    <property type="match status" value="1"/>
</dbReference>
<dbReference type="SUPFAM" id="SSF53218">
    <property type="entry name" value="Molybdenum cofactor biosynthesis proteins"/>
    <property type="match status" value="1"/>
</dbReference>
<feature type="chain" id="PRO_1000124997" description="CinA-like protein">
    <location>
        <begin position="1"/>
        <end position="406"/>
    </location>
</feature>
<protein>
    <recommendedName>
        <fullName evidence="1">CinA-like protein</fullName>
    </recommendedName>
</protein>
<proteinExistence type="inferred from homology"/>
<sequence>MDAVVLSIGTELIDGHLTDTNATFLARELAALGIPLRWVAQVGDDLDWIVRMLRRAWEDASLIVTTGGIGPTEDDLTREAIAQLLAEPLTIDPALLEEIRAFFAARGLTMPERNAKQASRIPSCEPLPNPIGTAPGWFVRRDGHIIVTMPGVPREMMRMWHEQAVPRLLPSIGGGAIRFRTLKTIGLGESLVEERIHDLIATSRARIATYAKDDGVHVRITAHAPDAGAAERLLDEVERALRARLGSAVYGTDDTTLGGAILELLGRSGWTLAITEWASGSRLTSLLAEEPAAGQFLRTATILTSQPPLDSSLEEVARDLAQRTAVAAGSDCGLAIIVRIDPGPTADRSVGQAALAVSTPATVVTRTHQITSHPQEIRRRVGLWAAEFLRLALLEASIQESTATSA</sequence>
<accession>B9L1M7</accession>
<reference key="1">
    <citation type="journal article" date="2009" name="PLoS ONE">
        <title>Complete genome sequence of the aerobic CO-oxidizing thermophile Thermomicrobium roseum.</title>
        <authorList>
            <person name="Wu D."/>
            <person name="Raymond J."/>
            <person name="Wu M."/>
            <person name="Chatterji S."/>
            <person name="Ren Q."/>
            <person name="Graham J.E."/>
            <person name="Bryant D.A."/>
            <person name="Robb F."/>
            <person name="Colman A."/>
            <person name="Tallon L.J."/>
            <person name="Badger J.H."/>
            <person name="Madupu R."/>
            <person name="Ward N.L."/>
            <person name="Eisen J.A."/>
        </authorList>
    </citation>
    <scope>NUCLEOTIDE SEQUENCE [LARGE SCALE GENOMIC DNA]</scope>
    <source>
        <strain>ATCC 27502 / DSM 5159 / P-2</strain>
    </source>
</reference>
<name>CINAL_THERP</name>
<keyword id="KW-1185">Reference proteome</keyword>